<organismHost>
    <name type="scientific">Aves</name>
    <dbReference type="NCBI Taxonomy" id="8782"/>
</organismHost>
<gene>
    <name evidence="1" type="primary">PB1</name>
</gene>
<proteinExistence type="inferred from homology"/>
<evidence type="ECO:0000255" key="1">
    <source>
        <dbReference type="HAMAP-Rule" id="MF_04065"/>
    </source>
</evidence>
<evidence type="ECO:0000256" key="2">
    <source>
        <dbReference type="SAM" id="MobiDB-lite"/>
    </source>
</evidence>
<name>RDRP_I83A4</name>
<keyword id="KW-1262">Eukaryotic host gene expression shutoff by virus</keyword>
<keyword id="KW-1191">Eukaryotic host transcription shutoff by virus</keyword>
<keyword id="KW-1035">Host cytoplasm</keyword>
<keyword id="KW-1190">Host gene expression shutoff by virus</keyword>
<keyword id="KW-1048">Host nucleus</keyword>
<keyword id="KW-0945">Host-virus interaction</keyword>
<keyword id="KW-1104">Inhibition of host RNA polymerase II by virus</keyword>
<keyword id="KW-0547">Nucleotide-binding</keyword>
<keyword id="KW-0548">Nucleotidyltransferase</keyword>
<keyword id="KW-0597">Phosphoprotein</keyword>
<keyword id="KW-0696">RNA-directed RNA polymerase</keyword>
<keyword id="KW-0808">Transferase</keyword>
<keyword id="KW-0693">Viral RNA replication</keyword>
<keyword id="KW-1195">Viral transcription</keyword>
<sequence>MDVNPTLLFLKVPAQNAISTTFPYTGDPPYSHGTGTGYTMDTVSRTHQYSEKGKWTTNTETGAPQLNPIDGPLPEDNEPSGYAQTDCVLEAMAFLEESHPGIFENSCLETMEVVQQTRVDKLTQGRQTYDWTLNRNQPAATALANTIEVFRSNGLTANESGRLIDFLKDVMESMDKEEMEITTHFQRKRRVRDNMTKKMVTQRTIGKKKQRLNKRSYLIRALTLNTMTKDAERGKLKRRAIATPGMQIRGFVYFVETLARSICEKLEQSGLPVGGNEKKAKLANVVRKMMTNSQDTELSFTITGDNTKWNENQNPRMFLAMITYITRNQPEWFRNVLSIAPIMFSNKMARLGKGYMFESKSMKLRTQIPAEMLANIDLKYFNESTRKKIEKIRPLLIDGTASLSPGMMMGMFNMLSTVLGVSILNLGQKRYTKTTYWWDGLQSSDDFALIVNALNHEGIQAGVDRFYRTCKLVGINMSKKKSYINRTGTFEFTSFFYRYGFVANFSMELPSFGVSGINESADMSIGVTVIKNNMINNDLGPATAQMALQLFIKDYRYTYRCHRGDTQIQTRRSFELKKLWEQTRSKAGLLVSDGGPNLYNIRNLHIPEVCLKWELMDEDYQGRLCNPLNPFVSHKEIESVNNAVVMPAHGPARSMEYDAVATTHSWTPKRNRSILNTSQRGILEDEQMYQKCCNLFEKFFPSSSYRRPVGISSMVEAMVSRARIDARIDFESGRVKKEEFAEIMKICSTIEELRRQK</sequence>
<feature type="chain" id="PRO_0000279612" description="RNA-directed RNA polymerase catalytic subunit">
    <location>
        <begin position="1"/>
        <end position="757"/>
    </location>
</feature>
<feature type="domain" description="RdRp catalytic" evidence="1">
    <location>
        <begin position="286"/>
        <end position="483"/>
    </location>
</feature>
<feature type="region of interest" description="Disordered" evidence="2">
    <location>
        <begin position="49"/>
        <end position="70"/>
    </location>
</feature>
<feature type="region of interest" description="Promoter-binding site" evidence="1">
    <location>
        <begin position="249"/>
        <end position="256"/>
    </location>
</feature>
<feature type="short sequence motif" description="Nuclear localization signal" evidence="1">
    <location>
        <begin position="187"/>
        <end position="195"/>
    </location>
</feature>
<feature type="short sequence motif" description="Nuclear localization signal" evidence="1">
    <location>
        <begin position="203"/>
        <end position="216"/>
    </location>
</feature>
<feature type="compositionally biased region" description="Polar residues" evidence="2">
    <location>
        <begin position="55"/>
        <end position="64"/>
    </location>
</feature>
<reference key="1">
    <citation type="journal article" date="2006" name="Science">
        <title>Large-scale sequence analysis of avian influenza isolates.</title>
        <authorList>
            <person name="Obenauer J.C."/>
            <person name="Denson J."/>
            <person name="Mehta P.K."/>
            <person name="Su X."/>
            <person name="Mukatira S."/>
            <person name="Finkelstein D.B."/>
            <person name="Xu X."/>
            <person name="Wang J."/>
            <person name="Ma J."/>
            <person name="Fan Y."/>
            <person name="Rakestraw K.M."/>
            <person name="Webster R.G."/>
            <person name="Hoffmann E."/>
            <person name="Krauss S."/>
            <person name="Zheng J."/>
            <person name="Zhang Z."/>
            <person name="Naeve C.W."/>
        </authorList>
    </citation>
    <scope>NUCLEOTIDE SEQUENCE [GENOMIC RNA]</scope>
</reference>
<comment type="function">
    <text evidence="1">RNA-dependent RNA polymerase which is responsible for replication and transcription of virus RNA segments. The transcription of viral mRNAs occurs by a unique mechanism called cap-snatching. 5' methylated caps of cellular mRNAs are cleaved after 10-13 nucleotides by PA. In turn, these short capped RNAs are used as primers by PB1 for transcription of viral mRNAs. During virus replication, PB1 initiates RNA synthesis and copy vRNA into complementary RNA (cRNA) which in turn serves as a template for the production of more vRNAs.</text>
</comment>
<comment type="catalytic activity">
    <reaction evidence="1">
        <text>RNA(n) + a ribonucleoside 5'-triphosphate = RNA(n+1) + diphosphate</text>
        <dbReference type="Rhea" id="RHEA:21248"/>
        <dbReference type="Rhea" id="RHEA-COMP:14527"/>
        <dbReference type="Rhea" id="RHEA-COMP:17342"/>
        <dbReference type="ChEBI" id="CHEBI:33019"/>
        <dbReference type="ChEBI" id="CHEBI:61557"/>
        <dbReference type="ChEBI" id="CHEBI:140395"/>
        <dbReference type="EC" id="2.7.7.48"/>
    </reaction>
</comment>
<comment type="subunit">
    <text evidence="1">Influenza RNA polymerase is composed of three subunits: PB1, PB2 and PA. Interacts (via N-terminus) with PA (via C-terminus). Interacts (via C-terminus) with PB2 (via N-terminus); this interaction is essential for transcription initiation.</text>
</comment>
<comment type="subcellular location">
    <subcellularLocation>
        <location evidence="1">Host nucleus</location>
    </subcellularLocation>
    <subcellularLocation>
        <location evidence="1">Host cytoplasm</location>
    </subcellularLocation>
</comment>
<comment type="PTM">
    <text evidence="1">Phosphorylated by host PRKCA.</text>
</comment>
<comment type="similarity">
    <text evidence="1">Belongs to the influenza viruses polymerase PB1 family.</text>
</comment>
<dbReference type="EC" id="2.7.7.48" evidence="1"/>
<dbReference type="EMBL" id="CY015095">
    <property type="protein sequence ID" value="ABI85125.1"/>
    <property type="molecule type" value="Genomic_RNA"/>
</dbReference>
<dbReference type="SMR" id="Q0A2F7"/>
<dbReference type="Proteomes" id="UP000008583">
    <property type="component" value="Genome"/>
</dbReference>
<dbReference type="GO" id="GO:0030430">
    <property type="term" value="C:host cell cytoplasm"/>
    <property type="evidence" value="ECO:0007669"/>
    <property type="project" value="UniProtKB-SubCell"/>
</dbReference>
<dbReference type="GO" id="GO:0042025">
    <property type="term" value="C:host cell nucleus"/>
    <property type="evidence" value="ECO:0007669"/>
    <property type="project" value="UniProtKB-SubCell"/>
</dbReference>
<dbReference type="GO" id="GO:0000166">
    <property type="term" value="F:nucleotide binding"/>
    <property type="evidence" value="ECO:0007669"/>
    <property type="project" value="UniProtKB-UniRule"/>
</dbReference>
<dbReference type="GO" id="GO:0003723">
    <property type="term" value="F:RNA binding"/>
    <property type="evidence" value="ECO:0007669"/>
    <property type="project" value="InterPro"/>
</dbReference>
<dbReference type="GO" id="GO:0003968">
    <property type="term" value="F:RNA-directed RNA polymerase activity"/>
    <property type="evidence" value="ECO:0007669"/>
    <property type="project" value="UniProtKB-UniRule"/>
</dbReference>
<dbReference type="GO" id="GO:0006351">
    <property type="term" value="P:DNA-templated transcription"/>
    <property type="evidence" value="ECO:0007669"/>
    <property type="project" value="UniProtKB-UniRule"/>
</dbReference>
<dbReference type="GO" id="GO:0039657">
    <property type="term" value="P:symbiont-mediated suppression of host gene expression"/>
    <property type="evidence" value="ECO:0007669"/>
    <property type="project" value="UniProtKB-KW"/>
</dbReference>
<dbReference type="GO" id="GO:0039523">
    <property type="term" value="P:symbiont-mediated suppression of host mRNA transcription via inhibition of RNA polymerase II activity"/>
    <property type="evidence" value="ECO:0007669"/>
    <property type="project" value="UniProtKB-UniRule"/>
</dbReference>
<dbReference type="GO" id="GO:0039694">
    <property type="term" value="P:viral RNA genome replication"/>
    <property type="evidence" value="ECO:0007669"/>
    <property type="project" value="UniProtKB-UniRule"/>
</dbReference>
<dbReference type="GO" id="GO:0019083">
    <property type="term" value="P:viral transcription"/>
    <property type="evidence" value="ECO:0007669"/>
    <property type="project" value="UniProtKB-KW"/>
</dbReference>
<dbReference type="Gene3D" id="6.10.140.720">
    <property type="match status" value="1"/>
</dbReference>
<dbReference type="HAMAP" id="MF_04065">
    <property type="entry name" value="INFV_RDRP"/>
    <property type="match status" value="1"/>
</dbReference>
<dbReference type="InterPro" id="IPR007099">
    <property type="entry name" value="RNA-dir_pol_NSvirus"/>
</dbReference>
<dbReference type="InterPro" id="IPR001407">
    <property type="entry name" value="RNA_pol_PB1_influenza"/>
</dbReference>
<dbReference type="Pfam" id="PF00602">
    <property type="entry name" value="Flu_PB1"/>
    <property type="match status" value="1"/>
</dbReference>
<dbReference type="PIRSF" id="PIRSF000827">
    <property type="entry name" value="RdRPol_OMV"/>
    <property type="match status" value="1"/>
</dbReference>
<dbReference type="PROSITE" id="PS50525">
    <property type="entry name" value="RDRP_SSRNA_NEG_SEG"/>
    <property type="match status" value="1"/>
</dbReference>
<organism>
    <name type="scientific">Influenza A virus (strain A/Turkey/Ireland/1378/1983 H5N8)</name>
    <dbReference type="NCBI Taxonomy" id="380285"/>
    <lineage>
        <taxon>Viruses</taxon>
        <taxon>Riboviria</taxon>
        <taxon>Orthornavirae</taxon>
        <taxon>Negarnaviricota</taxon>
        <taxon>Polyploviricotina</taxon>
        <taxon>Insthoviricetes</taxon>
        <taxon>Articulavirales</taxon>
        <taxon>Orthomyxoviridae</taxon>
        <taxon>Alphainfluenzavirus</taxon>
        <taxon>Alphainfluenzavirus influenzae</taxon>
        <taxon>Influenza A virus</taxon>
    </lineage>
</organism>
<accession>Q0A2F7</accession>
<protein>
    <recommendedName>
        <fullName evidence="1">RNA-directed RNA polymerase catalytic subunit</fullName>
        <ecNumber evidence="1">2.7.7.48</ecNumber>
    </recommendedName>
    <alternativeName>
        <fullName evidence="1">Polymerase basic protein 1</fullName>
        <shortName evidence="1">PB1</shortName>
    </alternativeName>
    <alternativeName>
        <fullName evidence="1">RNA-directed RNA polymerase subunit P1</fullName>
    </alternativeName>
</protein>